<feature type="chain" id="PRO_0000372713" description="Uncharacterized MFS-type transporter C1271.10c">
    <location>
        <begin position="1"/>
        <end position="581"/>
    </location>
</feature>
<feature type="transmembrane region" description="Helical" evidence="1">
    <location>
        <begin position="61"/>
        <end position="81"/>
    </location>
</feature>
<feature type="transmembrane region" description="Helical" evidence="1">
    <location>
        <begin position="100"/>
        <end position="120"/>
    </location>
</feature>
<feature type="transmembrane region" description="Helical" evidence="1">
    <location>
        <begin position="125"/>
        <end position="145"/>
    </location>
</feature>
<feature type="transmembrane region" description="Helical" evidence="1">
    <location>
        <begin position="187"/>
        <end position="207"/>
    </location>
</feature>
<feature type="transmembrane region" description="Helical" evidence="1">
    <location>
        <begin position="214"/>
        <end position="234"/>
    </location>
</feature>
<feature type="transmembrane region" description="Helical" evidence="1">
    <location>
        <begin position="340"/>
        <end position="360"/>
    </location>
</feature>
<feature type="transmembrane region" description="Helical" evidence="1">
    <location>
        <begin position="382"/>
        <end position="402"/>
    </location>
</feature>
<feature type="transmembrane region" description="Helical" evidence="1">
    <location>
        <begin position="426"/>
        <end position="446"/>
    </location>
</feature>
<feature type="transmembrane region" description="Helical" evidence="1">
    <location>
        <begin position="458"/>
        <end position="478"/>
    </location>
</feature>
<feature type="transmembrane region" description="Helical" evidence="1">
    <location>
        <begin position="486"/>
        <end position="506"/>
    </location>
</feature>
<feature type="transmembrane region" description="Helical" evidence="1">
    <location>
        <begin position="522"/>
        <end position="542"/>
    </location>
</feature>
<feature type="modified residue" description="Phosphoserine" evidence="3">
    <location>
        <position position="28"/>
    </location>
</feature>
<comment type="subcellular location">
    <subcellularLocation>
        <location evidence="2">Cytoplasm</location>
        <location evidence="2">Cell cortex</location>
    </subcellularLocation>
    <subcellularLocation>
        <location evidence="1">Membrane</location>
        <topology evidence="1">Multi-pass membrane protein</topology>
    </subcellularLocation>
</comment>
<comment type="similarity">
    <text evidence="1">Belongs to the major facilitator superfamily.</text>
</comment>
<proteinExistence type="evidence at protein level"/>
<sequence length="581" mass="65279">MEPDGYVEELPGTILIYKENQYAASEHSVLKKDGDIVLQPQPSDDPNDPLNWNKFRKNWHLVLICLVSLVTGAIANDAGSAQDQMNAELGISYDAMDNAAGVLFICVGYFTYLAMPATFLYGRRCVYLVCLLFGMLGSMWFALVKTTSNSIGNQAFIGISEACAEALTQFSVSEVFFEHERGIKIGIYILSTSVGTYLGPLAAGYIASSQGWRWIGWWGLIISGITFVLFLFTFEETTFDRAAAIDRKQIQISNDQLTVKEDFDLKDMQSDIKPDVEKSDAMDDSKMKVDYTVNEISNAVQPIYSKPSYWKRIALITPANSLSGIGFRQYIMRLFQTLRIFLFPAVLYSGLQWGAQDAWLSFYLTTEEEDWMEAPYNYGDNAVAIMNVPCIIGATIGCIYGGYFGDYFTLWAAKRNNGIKEAESRLWLMILPCIINPIGLFMFGIGTARHWHWGPTYVGLGFIGFGWGCAGDISMAYLMDAYPGMVLEAMVGVSVINNTFGYVFTFACQSWIDSLGTERTYISIGVLCFIFIATSFPMILCGKRLRKWTAKQYYTFLNVRNRLDEKIPDQDRRGQDGVESR</sequence>
<evidence type="ECO:0000255" key="1"/>
<evidence type="ECO:0000269" key="2">
    <source>
    </source>
</evidence>
<evidence type="ECO:0000269" key="3">
    <source>
    </source>
</evidence>
<evidence type="ECO:0000305" key="4"/>
<evidence type="ECO:0000312" key="5">
    <source>
        <dbReference type="EMBL" id="CAA22200.1"/>
    </source>
</evidence>
<reference evidence="5" key="1">
    <citation type="journal article" date="2002" name="Nature">
        <title>The genome sequence of Schizosaccharomyces pombe.</title>
        <authorList>
            <person name="Wood V."/>
            <person name="Gwilliam R."/>
            <person name="Rajandream M.A."/>
            <person name="Lyne M.H."/>
            <person name="Lyne R."/>
            <person name="Stewart A."/>
            <person name="Sgouros J.G."/>
            <person name="Peat N."/>
            <person name="Hayles J."/>
            <person name="Baker S.G."/>
            <person name="Basham D."/>
            <person name="Bowman S."/>
            <person name="Brooks K."/>
            <person name="Brown D."/>
            <person name="Brown S."/>
            <person name="Chillingworth T."/>
            <person name="Churcher C.M."/>
            <person name="Collins M."/>
            <person name="Connor R."/>
            <person name="Cronin A."/>
            <person name="Davis P."/>
            <person name="Feltwell T."/>
            <person name="Fraser A."/>
            <person name="Gentles S."/>
            <person name="Goble A."/>
            <person name="Hamlin N."/>
            <person name="Harris D.E."/>
            <person name="Hidalgo J."/>
            <person name="Hodgson G."/>
            <person name="Holroyd S."/>
            <person name="Hornsby T."/>
            <person name="Howarth S."/>
            <person name="Huckle E.J."/>
            <person name="Hunt S."/>
            <person name="Jagels K."/>
            <person name="James K.D."/>
            <person name="Jones L."/>
            <person name="Jones M."/>
            <person name="Leather S."/>
            <person name="McDonald S."/>
            <person name="McLean J."/>
            <person name="Mooney P."/>
            <person name="Moule S."/>
            <person name="Mungall K.L."/>
            <person name="Murphy L.D."/>
            <person name="Niblett D."/>
            <person name="Odell C."/>
            <person name="Oliver K."/>
            <person name="O'Neil S."/>
            <person name="Pearson D."/>
            <person name="Quail M.A."/>
            <person name="Rabbinowitsch E."/>
            <person name="Rutherford K.M."/>
            <person name="Rutter S."/>
            <person name="Saunders D."/>
            <person name="Seeger K."/>
            <person name="Sharp S."/>
            <person name="Skelton J."/>
            <person name="Simmonds M.N."/>
            <person name="Squares R."/>
            <person name="Squares S."/>
            <person name="Stevens K."/>
            <person name="Taylor K."/>
            <person name="Taylor R.G."/>
            <person name="Tivey A."/>
            <person name="Walsh S.V."/>
            <person name="Warren T."/>
            <person name="Whitehead S."/>
            <person name="Woodward J.R."/>
            <person name="Volckaert G."/>
            <person name="Aert R."/>
            <person name="Robben J."/>
            <person name="Grymonprez B."/>
            <person name="Weltjens I."/>
            <person name="Vanstreels E."/>
            <person name="Rieger M."/>
            <person name="Schaefer M."/>
            <person name="Mueller-Auer S."/>
            <person name="Gabel C."/>
            <person name="Fuchs M."/>
            <person name="Duesterhoeft A."/>
            <person name="Fritzc C."/>
            <person name="Holzer E."/>
            <person name="Moestl D."/>
            <person name="Hilbert H."/>
            <person name="Borzym K."/>
            <person name="Langer I."/>
            <person name="Beck A."/>
            <person name="Lehrach H."/>
            <person name="Reinhardt R."/>
            <person name="Pohl T.M."/>
            <person name="Eger P."/>
            <person name="Zimmermann W."/>
            <person name="Wedler H."/>
            <person name="Wambutt R."/>
            <person name="Purnelle B."/>
            <person name="Goffeau A."/>
            <person name="Cadieu E."/>
            <person name="Dreano S."/>
            <person name="Gloux S."/>
            <person name="Lelaure V."/>
            <person name="Mottier S."/>
            <person name="Galibert F."/>
            <person name="Aves S.J."/>
            <person name="Xiang Z."/>
            <person name="Hunt C."/>
            <person name="Moore K."/>
            <person name="Hurst S.M."/>
            <person name="Lucas M."/>
            <person name="Rochet M."/>
            <person name="Gaillardin C."/>
            <person name="Tallada V.A."/>
            <person name="Garzon A."/>
            <person name="Thode G."/>
            <person name="Daga R.R."/>
            <person name="Cruzado L."/>
            <person name="Jimenez J."/>
            <person name="Sanchez M."/>
            <person name="del Rey F."/>
            <person name="Benito J."/>
            <person name="Dominguez A."/>
            <person name="Revuelta J.L."/>
            <person name="Moreno S."/>
            <person name="Armstrong J."/>
            <person name="Forsburg S.L."/>
            <person name="Cerutti L."/>
            <person name="Lowe T."/>
            <person name="McCombie W.R."/>
            <person name="Paulsen I."/>
            <person name="Potashkin J."/>
            <person name="Shpakovski G.V."/>
            <person name="Ussery D."/>
            <person name="Barrell B.G."/>
            <person name="Nurse P."/>
        </authorList>
    </citation>
    <scope>NUCLEOTIDE SEQUENCE [LARGE SCALE GENOMIC DNA]</scope>
    <source>
        <strain>972 / ATCC 24843</strain>
    </source>
</reference>
<reference evidence="4" key="2">
    <citation type="journal article" date="2006" name="Nat. Biotechnol.">
        <title>ORFeome cloning and global analysis of protein localization in the fission yeast Schizosaccharomyces pombe.</title>
        <authorList>
            <person name="Matsuyama A."/>
            <person name="Arai R."/>
            <person name="Yashiroda Y."/>
            <person name="Shirai A."/>
            <person name="Kamata A."/>
            <person name="Sekido S."/>
            <person name="Kobayashi Y."/>
            <person name="Hashimoto A."/>
            <person name="Hamamoto M."/>
            <person name="Hiraoka Y."/>
            <person name="Horinouchi S."/>
            <person name="Yoshida M."/>
        </authorList>
    </citation>
    <scope>SUBCELLULAR LOCATION [LARGE SCALE ANALYSIS]</scope>
</reference>
<reference evidence="4" key="3">
    <citation type="journal article" date="2008" name="J. Proteome Res.">
        <title>Phosphoproteome analysis of fission yeast.</title>
        <authorList>
            <person name="Wilson-Grady J.T."/>
            <person name="Villen J."/>
            <person name="Gygi S.P."/>
        </authorList>
    </citation>
    <scope>PHOSPHORYLATION [LARGE SCALE ANALYSIS] AT SER-28</scope>
    <scope>IDENTIFICATION BY MASS SPECTROMETRY</scope>
</reference>
<accession>O94343</accession>
<organism>
    <name type="scientific">Schizosaccharomyces pombe (strain 972 / ATCC 24843)</name>
    <name type="common">Fission yeast</name>
    <dbReference type="NCBI Taxonomy" id="284812"/>
    <lineage>
        <taxon>Eukaryota</taxon>
        <taxon>Fungi</taxon>
        <taxon>Dikarya</taxon>
        <taxon>Ascomycota</taxon>
        <taxon>Taphrinomycotina</taxon>
        <taxon>Schizosaccharomycetes</taxon>
        <taxon>Schizosaccharomycetales</taxon>
        <taxon>Schizosaccharomycetaceae</taxon>
        <taxon>Schizosaccharomyces</taxon>
    </lineage>
</organism>
<gene>
    <name type="ORF">SPBC1271.10c</name>
</gene>
<name>YHMA_SCHPO</name>
<protein>
    <recommendedName>
        <fullName>Uncharacterized MFS-type transporter C1271.10c</fullName>
    </recommendedName>
</protein>
<keyword id="KW-0963">Cytoplasm</keyword>
<keyword id="KW-0472">Membrane</keyword>
<keyword id="KW-0597">Phosphoprotein</keyword>
<keyword id="KW-1185">Reference proteome</keyword>
<keyword id="KW-0812">Transmembrane</keyword>
<keyword id="KW-1133">Transmembrane helix</keyword>
<keyword id="KW-0813">Transport</keyword>
<dbReference type="EMBL" id="CU329671">
    <property type="protein sequence ID" value="CAA22200.1"/>
    <property type="molecule type" value="Genomic_DNA"/>
</dbReference>
<dbReference type="PIR" id="T39346">
    <property type="entry name" value="T39346"/>
</dbReference>
<dbReference type="RefSeq" id="NP_595140.1">
    <property type="nucleotide sequence ID" value="NM_001021048.2"/>
</dbReference>
<dbReference type="BioGRID" id="276737">
    <property type="interactions" value="1"/>
</dbReference>
<dbReference type="FunCoup" id="O94343">
    <property type="interactions" value="30"/>
</dbReference>
<dbReference type="iPTMnet" id="O94343"/>
<dbReference type="PaxDb" id="4896-SPBC1271.10c.1"/>
<dbReference type="EnsemblFungi" id="SPBC1271.10c.1">
    <property type="protein sequence ID" value="SPBC1271.10c.1:pep"/>
    <property type="gene ID" value="SPBC1271.10c"/>
</dbReference>
<dbReference type="KEGG" id="spo:2540204"/>
<dbReference type="PomBase" id="SPBC1271.10c"/>
<dbReference type="VEuPathDB" id="FungiDB:SPBC1271.10c"/>
<dbReference type="eggNOG" id="KOG0255">
    <property type="taxonomic scope" value="Eukaryota"/>
</dbReference>
<dbReference type="HOGENOM" id="CLU_008455_13_3_1"/>
<dbReference type="InParanoid" id="O94343"/>
<dbReference type="OMA" id="WGMQNIA"/>
<dbReference type="PhylomeDB" id="O94343"/>
<dbReference type="PRO" id="PR:O94343"/>
<dbReference type="Proteomes" id="UP000002485">
    <property type="component" value="Chromosome II"/>
</dbReference>
<dbReference type="GO" id="GO:0005938">
    <property type="term" value="C:cell cortex"/>
    <property type="evidence" value="ECO:0007005"/>
    <property type="project" value="PomBase"/>
</dbReference>
<dbReference type="GO" id="GO:0005886">
    <property type="term" value="C:plasma membrane"/>
    <property type="evidence" value="ECO:0000318"/>
    <property type="project" value="GO_Central"/>
</dbReference>
<dbReference type="GO" id="GO:0022857">
    <property type="term" value="F:transmembrane transporter activity"/>
    <property type="evidence" value="ECO:0000318"/>
    <property type="project" value="GO_Central"/>
</dbReference>
<dbReference type="GO" id="GO:0055085">
    <property type="term" value="P:transmembrane transport"/>
    <property type="evidence" value="ECO:0000318"/>
    <property type="project" value="GO_Central"/>
</dbReference>
<dbReference type="CDD" id="cd17323">
    <property type="entry name" value="MFS_Tpo1_MDR_like"/>
    <property type="match status" value="1"/>
</dbReference>
<dbReference type="FunFam" id="1.20.1250.20:FF:000224">
    <property type="entry name" value="MFS transporter, putative"/>
    <property type="match status" value="1"/>
</dbReference>
<dbReference type="Gene3D" id="1.20.1250.20">
    <property type="entry name" value="MFS general substrate transporter like domains"/>
    <property type="match status" value="1"/>
</dbReference>
<dbReference type="InterPro" id="IPR011701">
    <property type="entry name" value="MFS"/>
</dbReference>
<dbReference type="InterPro" id="IPR020846">
    <property type="entry name" value="MFS_dom"/>
</dbReference>
<dbReference type="InterPro" id="IPR036259">
    <property type="entry name" value="MFS_trans_sf"/>
</dbReference>
<dbReference type="PANTHER" id="PTHR23502">
    <property type="entry name" value="MAJOR FACILITATOR SUPERFAMILY"/>
    <property type="match status" value="1"/>
</dbReference>
<dbReference type="PANTHER" id="PTHR23502:SF34">
    <property type="entry name" value="PROTEIN HOL1"/>
    <property type="match status" value="1"/>
</dbReference>
<dbReference type="Pfam" id="PF07690">
    <property type="entry name" value="MFS_1"/>
    <property type="match status" value="1"/>
</dbReference>
<dbReference type="SUPFAM" id="SSF103473">
    <property type="entry name" value="MFS general substrate transporter"/>
    <property type="match status" value="1"/>
</dbReference>
<dbReference type="PROSITE" id="PS50850">
    <property type="entry name" value="MFS"/>
    <property type="match status" value="1"/>
</dbReference>